<evidence type="ECO:0000256" key="1">
    <source>
        <dbReference type="SAM" id="MobiDB-lite"/>
    </source>
</evidence>
<evidence type="ECO:0000269" key="2">
    <source>
    </source>
</evidence>
<evidence type="ECO:0000303" key="3">
    <source>
    </source>
</evidence>
<evidence type="ECO:0000305" key="4"/>
<evidence type="ECO:0000312" key="5">
    <source>
        <dbReference type="Proteomes" id="UP000001940"/>
    </source>
</evidence>
<evidence type="ECO:0000312" key="6">
    <source>
        <dbReference type="WormBase" id="F32A7.5a"/>
    </source>
</evidence>
<evidence type="ECO:0000312" key="7">
    <source>
        <dbReference type="WormBase" id="F32A7.5b"/>
    </source>
</evidence>
<evidence type="ECO:0000312" key="8">
    <source>
        <dbReference type="WormBase" id="F32A7.5c"/>
    </source>
</evidence>
<evidence type="ECO:0000312" key="9">
    <source>
        <dbReference type="WormBase" id="F32A7.5d"/>
    </source>
</evidence>
<gene>
    <name evidence="3 6" type="primary">maph-1.1</name>
    <name evidence="6" type="ORF">F32A7.5</name>
</gene>
<proteinExistence type="evidence at protein level"/>
<feature type="chain" id="PRO_0000440782" description="Microtubule-associated protein homolog maph-1.1" evidence="4">
    <location>
        <begin position="1"/>
        <end position="878"/>
    </location>
</feature>
<feature type="region of interest" description="Disordered" evidence="1">
    <location>
        <begin position="224"/>
        <end position="425"/>
    </location>
</feature>
<feature type="region of interest" description="Disordered" evidence="1">
    <location>
        <begin position="456"/>
        <end position="518"/>
    </location>
</feature>
<feature type="compositionally biased region" description="Low complexity" evidence="1">
    <location>
        <begin position="241"/>
        <end position="268"/>
    </location>
</feature>
<feature type="compositionally biased region" description="Low complexity" evidence="1">
    <location>
        <begin position="278"/>
        <end position="293"/>
    </location>
</feature>
<feature type="compositionally biased region" description="Low complexity" evidence="1">
    <location>
        <begin position="310"/>
        <end position="321"/>
    </location>
</feature>
<feature type="compositionally biased region" description="Low complexity" evidence="1">
    <location>
        <begin position="328"/>
        <end position="339"/>
    </location>
</feature>
<feature type="compositionally biased region" description="Basic and acidic residues" evidence="1">
    <location>
        <begin position="416"/>
        <end position="425"/>
    </location>
</feature>
<feature type="compositionally biased region" description="Basic and acidic residues" evidence="1">
    <location>
        <begin position="480"/>
        <end position="496"/>
    </location>
</feature>
<feature type="splice variant" id="VSP_058989" description="In isoform d." evidence="4">
    <location>
        <begin position="381"/>
        <end position="439"/>
    </location>
</feature>
<feature type="splice variant" id="VSP_058990" description="In isoform b." evidence="4">
    <location>
        <begin position="440"/>
        <end position="567"/>
    </location>
</feature>
<feature type="splice variant" id="VSP_058991" description="In isoform b." evidence="4">
    <original>D</original>
    <variation>DSGKFENSFDLINYF</variation>
    <location>
        <position position="816"/>
    </location>
</feature>
<feature type="splice variant" id="VSP_058992" description="In isoform c." evidence="4">
    <original>SA</original>
    <variation>T</variation>
    <location>
        <begin position="817"/>
        <end position="818"/>
    </location>
</feature>
<reference evidence="5" key="1">
    <citation type="journal article" date="1998" name="Science">
        <title>Genome sequence of the nematode C. elegans: a platform for investigating biology.</title>
        <authorList>
            <consortium name="The C. elegans sequencing consortium"/>
        </authorList>
    </citation>
    <scope>NUCLEOTIDE SEQUENCE [LARGE SCALE GENOMIC DNA]</scope>
    <source>
        <strain evidence="5">Bristol N2</strain>
    </source>
</reference>
<reference evidence="4" key="2">
    <citation type="journal article" date="2016" name="BMC Biol.">
        <title>A tissue-specific protein purification approach in Caenorhabditis elegans identifies novel interaction partners of DLG-1/Discs large.</title>
        <authorList>
            <person name="Waaijers S."/>
            <person name="Munoz J."/>
            <person name="Berends C."/>
            <person name="Ramalho J.J."/>
            <person name="Goerdayal S.S."/>
            <person name="Low T.Y."/>
            <person name="Zoumaro-Djayoon A.D."/>
            <person name="Hoffmann M."/>
            <person name="Koorman T."/>
            <person name="Tas R.P."/>
            <person name="Harterink M."/>
            <person name="Seelk S."/>
            <person name="Kerver J."/>
            <person name="Hoogenraad C.C."/>
            <person name="Bossinger O."/>
            <person name="Tursun B."/>
            <person name="van den Heuvel S."/>
            <person name="Heck A.J."/>
            <person name="Boxem M."/>
        </authorList>
    </citation>
    <scope>INTERACTION WITH DLG-1</scope>
    <scope>IDENTIFICATION BY MASS SPECTROMETRY</scope>
    <scope>SUBCELLULAR LOCATION</scope>
    <scope>DEVELOPMENTAL STAGE</scope>
</reference>
<keyword id="KW-0025">Alternative splicing</keyword>
<keyword id="KW-0966">Cell projection</keyword>
<keyword id="KW-0963">Cytoplasm</keyword>
<keyword id="KW-0206">Cytoskeleton</keyword>
<keyword id="KW-1185">Reference proteome</keyword>
<protein>
    <recommendedName>
        <fullName evidence="6">Microtubule-associated protein homolog maph-1.1</fullName>
    </recommendedName>
</protein>
<name>MAP11_CAEEL</name>
<comment type="subunit">
    <text evidence="2">Interacts with dlg-1.</text>
</comment>
<comment type="subcellular location">
    <subcellularLocation>
        <location evidence="2">Cell projection</location>
        <location evidence="2">Dendrite</location>
    </subcellularLocation>
    <subcellularLocation>
        <location evidence="2">Perikaryon</location>
    </subcellularLocation>
    <subcellularLocation>
        <location evidence="2">Cell projection</location>
        <location evidence="2">Axon</location>
    </subcellularLocation>
    <subcellularLocation>
        <location evidence="2">Cytoplasm</location>
        <location evidence="2">Cytoskeleton</location>
    </subcellularLocation>
    <text evidence="2">Localizes to microtubules in the neuronal cell body, axon and dendrites.</text>
</comment>
<comment type="alternative products">
    <event type="alternative splicing"/>
    <isoform>
        <id>P91859-1</id>
        <name evidence="6">a</name>
        <sequence type="displayed"/>
    </isoform>
    <isoform>
        <id>P91859-2</id>
        <name evidence="7">b</name>
        <sequence type="described" ref="VSP_058990 VSP_058991"/>
    </isoform>
    <isoform>
        <id>P91859-3</id>
        <name evidence="8">c</name>
        <sequence type="described" ref="VSP_058992"/>
    </isoform>
    <isoform>
        <id>P91859-4</id>
        <name evidence="9">d</name>
        <sequence type="described" ref="VSP_058989"/>
    </isoform>
</comment>
<comment type="developmental stage">
    <text evidence="2">Expressed in somatic tissues including neurons, body wall muscle cells, the vulva, vulval muscle cells, the hypodermis, seam cells, and intestinal cells at the L4 stage of larval development.</text>
</comment>
<comment type="similarity">
    <text evidence="4">Belongs to the MAP1A/MAP1B/MAP1S family.</text>
</comment>
<organism evidence="5">
    <name type="scientific">Caenorhabditis elegans</name>
    <dbReference type="NCBI Taxonomy" id="6239"/>
    <lineage>
        <taxon>Eukaryota</taxon>
        <taxon>Metazoa</taxon>
        <taxon>Ecdysozoa</taxon>
        <taxon>Nematoda</taxon>
        <taxon>Chromadorea</taxon>
        <taxon>Rhabditida</taxon>
        <taxon>Rhabditina</taxon>
        <taxon>Rhabditomorpha</taxon>
        <taxon>Rhabditoidea</taxon>
        <taxon>Rhabditidae</taxon>
        <taxon>Peloderinae</taxon>
        <taxon>Caenorhabditis</taxon>
    </lineage>
</organism>
<dbReference type="EMBL" id="BX284601">
    <property type="protein sequence ID" value="CAB05498.1"/>
    <property type="molecule type" value="Genomic_DNA"/>
</dbReference>
<dbReference type="EMBL" id="BX284601">
    <property type="protein sequence ID" value="CAD92390.1"/>
    <property type="molecule type" value="Genomic_DNA"/>
</dbReference>
<dbReference type="EMBL" id="BX284601">
    <property type="protein sequence ID" value="CAD92391.1"/>
    <property type="molecule type" value="Genomic_DNA"/>
</dbReference>
<dbReference type="EMBL" id="BX284601">
    <property type="protein sequence ID" value="CCF23322.1"/>
    <property type="molecule type" value="Genomic_DNA"/>
</dbReference>
<dbReference type="PIR" id="T21621">
    <property type="entry name" value="T21621"/>
</dbReference>
<dbReference type="RefSeq" id="NP_001021436.1">
    <molecule id="P91859-1"/>
    <property type="nucleotide sequence ID" value="NM_001026265.3"/>
</dbReference>
<dbReference type="RefSeq" id="NP_001021437.1">
    <molecule id="P91859-2"/>
    <property type="nucleotide sequence ID" value="NM_001026266.3"/>
</dbReference>
<dbReference type="RefSeq" id="NP_001021438.1">
    <molecule id="P91859-3"/>
    <property type="nucleotide sequence ID" value="NM_001026267.3"/>
</dbReference>
<dbReference type="RefSeq" id="NP_001252456.1">
    <molecule id="P91859-4"/>
    <property type="nucleotide sequence ID" value="NM_001265527.4"/>
</dbReference>
<dbReference type="FunCoup" id="P91859">
    <property type="interactions" value="220"/>
</dbReference>
<dbReference type="STRING" id="6239.F32A7.5a.1"/>
<dbReference type="PaxDb" id="6239-F32A7.5a"/>
<dbReference type="PeptideAtlas" id="P91859"/>
<dbReference type="EnsemblMetazoa" id="F32A7.5a.1">
    <molecule id="P91859-1"/>
    <property type="protein sequence ID" value="F32A7.5a.1"/>
    <property type="gene ID" value="WBGene00009306"/>
</dbReference>
<dbReference type="EnsemblMetazoa" id="F32A7.5b.1">
    <molecule id="P91859-2"/>
    <property type="protein sequence ID" value="F32A7.5b.1"/>
    <property type="gene ID" value="WBGene00009306"/>
</dbReference>
<dbReference type="EnsemblMetazoa" id="F32A7.5c.1">
    <molecule id="P91859-3"/>
    <property type="protein sequence ID" value="F32A7.5c.1"/>
    <property type="gene ID" value="WBGene00009306"/>
</dbReference>
<dbReference type="EnsemblMetazoa" id="F32A7.5d.1">
    <molecule id="P91859-4"/>
    <property type="protein sequence ID" value="F32A7.5d.1"/>
    <property type="gene ID" value="WBGene00009306"/>
</dbReference>
<dbReference type="GeneID" id="173357"/>
<dbReference type="KEGG" id="cel:CELE_F32A7.5"/>
<dbReference type="UCSC" id="F32A7.5c">
    <property type="organism name" value="c. elegans"/>
</dbReference>
<dbReference type="AGR" id="WB:WBGene00009306"/>
<dbReference type="CTD" id="173357"/>
<dbReference type="WormBase" id="F32A7.5a">
    <molecule id="P91859-1"/>
    <property type="protein sequence ID" value="CE09846"/>
    <property type="gene ID" value="WBGene00009306"/>
    <property type="gene designation" value="maph-1.1"/>
</dbReference>
<dbReference type="WormBase" id="F32A7.5b">
    <molecule id="P91859-2"/>
    <property type="protein sequence ID" value="CE34178"/>
    <property type="gene ID" value="WBGene00009306"/>
    <property type="gene designation" value="maph-1.1"/>
</dbReference>
<dbReference type="WormBase" id="F32A7.5c">
    <molecule id="P91859-3"/>
    <property type="protein sequence ID" value="CE34179"/>
    <property type="gene ID" value="WBGene00009306"/>
    <property type="gene designation" value="maph-1.1"/>
</dbReference>
<dbReference type="WormBase" id="F32A7.5d">
    <molecule id="P91859-4"/>
    <property type="protein sequence ID" value="CE47031"/>
    <property type="gene ID" value="WBGene00009306"/>
    <property type="gene designation" value="maph-1.1"/>
</dbReference>
<dbReference type="eggNOG" id="KOG3592">
    <property type="taxonomic scope" value="Eukaryota"/>
</dbReference>
<dbReference type="GeneTree" id="ENSGT00970000196160"/>
<dbReference type="InParanoid" id="P91859"/>
<dbReference type="OMA" id="PLYFDIV"/>
<dbReference type="OrthoDB" id="5847517at2759"/>
<dbReference type="PhylomeDB" id="P91859"/>
<dbReference type="PRO" id="PR:P91859"/>
<dbReference type="Proteomes" id="UP000001940">
    <property type="component" value="Chromosome I"/>
</dbReference>
<dbReference type="Bgee" id="WBGene00009306">
    <property type="expression patterns" value="Expressed in pharyngeal muscle cell (C elegans) and 3 other cell types or tissues"/>
</dbReference>
<dbReference type="GO" id="GO:0030424">
    <property type="term" value="C:axon"/>
    <property type="evidence" value="ECO:0007669"/>
    <property type="project" value="UniProtKB-SubCell"/>
</dbReference>
<dbReference type="GO" id="GO:0005829">
    <property type="term" value="C:cytosol"/>
    <property type="evidence" value="ECO:0000318"/>
    <property type="project" value="GO_Central"/>
</dbReference>
<dbReference type="GO" id="GO:0030425">
    <property type="term" value="C:dendrite"/>
    <property type="evidence" value="ECO:0000318"/>
    <property type="project" value="GO_Central"/>
</dbReference>
<dbReference type="GO" id="GO:0005874">
    <property type="term" value="C:microtubule"/>
    <property type="evidence" value="ECO:0000318"/>
    <property type="project" value="GO_Central"/>
</dbReference>
<dbReference type="GO" id="GO:0005875">
    <property type="term" value="C:microtubule associated complex"/>
    <property type="evidence" value="ECO:0000318"/>
    <property type="project" value="GO_Central"/>
</dbReference>
<dbReference type="GO" id="GO:0015630">
    <property type="term" value="C:microtubule cytoskeleton"/>
    <property type="evidence" value="ECO:0000314"/>
    <property type="project" value="WormBase"/>
</dbReference>
<dbReference type="GO" id="GO:0043025">
    <property type="term" value="C:neuronal cell body"/>
    <property type="evidence" value="ECO:0000318"/>
    <property type="project" value="GO_Central"/>
</dbReference>
<dbReference type="GO" id="GO:0043204">
    <property type="term" value="C:perikaryon"/>
    <property type="evidence" value="ECO:0007669"/>
    <property type="project" value="UniProtKB-SubCell"/>
</dbReference>
<dbReference type="GO" id="GO:0045202">
    <property type="term" value="C:synapse"/>
    <property type="evidence" value="ECO:0000318"/>
    <property type="project" value="GO_Central"/>
</dbReference>
<dbReference type="GO" id="GO:0003779">
    <property type="term" value="F:actin binding"/>
    <property type="evidence" value="ECO:0000318"/>
    <property type="project" value="GO_Central"/>
</dbReference>
<dbReference type="GO" id="GO:0008017">
    <property type="term" value="F:microtubule binding"/>
    <property type="evidence" value="ECO:0000318"/>
    <property type="project" value="GO_Central"/>
</dbReference>
<dbReference type="GO" id="GO:0007409">
    <property type="term" value="P:axonogenesis"/>
    <property type="evidence" value="ECO:0000318"/>
    <property type="project" value="GO_Central"/>
</dbReference>
<dbReference type="GO" id="GO:0016358">
    <property type="term" value="P:dendrite development"/>
    <property type="evidence" value="ECO:0000318"/>
    <property type="project" value="GO_Central"/>
</dbReference>
<dbReference type="GO" id="GO:0000226">
    <property type="term" value="P:microtubule cytoskeleton organization"/>
    <property type="evidence" value="ECO:0000318"/>
    <property type="project" value="GO_Central"/>
</dbReference>
<dbReference type="GO" id="GO:0031114">
    <property type="term" value="P:regulation of microtubule depolymerization"/>
    <property type="evidence" value="ECO:0000318"/>
    <property type="project" value="GO_Central"/>
</dbReference>
<dbReference type="InterPro" id="IPR026074">
    <property type="entry name" value="MAP1"/>
</dbReference>
<dbReference type="PANTHER" id="PTHR13843:SF12">
    <property type="entry name" value="ATPASE F1_V1_A1 COMPLEX ALPHA_BETA SUBUNIT NUCLEOTIDE-BINDING DOMAIN-CONTAINING PROTEIN"/>
    <property type="match status" value="1"/>
</dbReference>
<dbReference type="PANTHER" id="PTHR13843">
    <property type="entry name" value="MICROTUBULE-ASSOCIATED PROTEIN"/>
    <property type="match status" value="1"/>
</dbReference>
<sequence length="878" mass="92238">MPEEYIMSSKACIYVLGGAANTAALFDFDGVYILDGGFAEKNPGFVAHVRDVSAVLLAAPTLGNLGTTSALLEQGKPLPVFTNTKPFKTAKPGSSGEIAKAIQEANSKILSVAPPLFNPKYPANIIYQSAAKGVLSLYILAGDVKDAEVITKALAGGNEAEVEKAAAEHGTIGVLLWRPAMTDQSVVRVLISGTSSLSRIQQSLDKAAKSLPFLNVPTVKSKDALSDIPAPAVPRPVAGKPSARPATTTGTATRPTRPAVPAASAPRALTSRAPAGPSRPTTTRNAAPAPRTAVPSRATVLTKTAPASKAPTRAPVPARSAPAPPRGAPAKPAANTAKAEPIAQKKTVGKVQGTAPSKPAPAAPASAATSPAPAPEAPRRDPNNVTIVLDDSLSPEDFNQGSAPMDIVVIPPTPEPPRHEVAQATHPEESIIDAEDLAKAPLEVDDVANLADVEDEIPPPVDAFKKPEPHPEPNVSGGSEEDKIPEPVDAFKKPDPVELDDFDPLKPSHPEPSAPVVPSDHIIIATPDPELPDIVAAVPFVSPSPKGPNDGLVKLDDELEKIAPGFEEPLIPQAPRDDGTLAECSEEVSKLVEISMDTDNSAEVAADLAKAVGEVTQLSADLQNLGLDEKTDEYVRKLSNQMIEDATLPFTSALASSIVTSNGSETNGHGEQAHAAQNGGIDHQKEIPKHDLMQSRSSVIENGAAVQYEKTDPALDDVLNACAQESEKIDASHPDNLHMPAAPGSAAPAKPVKFARPYYFDVVTVPRNEKLETSVAADGLQEFISKVRSRNVILASKDISGEQLQAILCGKQTWCDSAHPCNVIPTHSSPMLLDFRQKNEEQFAANNLQFSIPVEKQRTTVSSDAGAIEYELARVDLL</sequence>
<accession>P91859</accession>
<accession>H2FLK1</accession>
<accession>Q7YXB8</accession>
<accession>Q7YXB9</accession>